<evidence type="ECO:0000255" key="1">
    <source>
        <dbReference type="HAMAP-Rule" id="MF_00315"/>
    </source>
</evidence>
<organism>
    <name type="scientific">Nitratiruptor sp. (strain SB155-2)</name>
    <dbReference type="NCBI Taxonomy" id="387092"/>
    <lineage>
        <taxon>Bacteria</taxon>
        <taxon>Pseudomonadati</taxon>
        <taxon>Campylobacterota</taxon>
        <taxon>Epsilonproteobacteria</taxon>
        <taxon>Nautiliales</taxon>
        <taxon>Nitratiruptoraceae</taxon>
        <taxon>Nitratiruptor</taxon>
    </lineage>
</organism>
<comment type="function">
    <text evidence="1">Catalyzes the acyloin condensation reaction between C atoms 2 and 3 of pyruvate and glyceraldehyde 3-phosphate to yield 1-deoxy-D-xylulose-5-phosphate (DXP).</text>
</comment>
<comment type="catalytic activity">
    <reaction evidence="1">
        <text>D-glyceraldehyde 3-phosphate + pyruvate + H(+) = 1-deoxy-D-xylulose 5-phosphate + CO2</text>
        <dbReference type="Rhea" id="RHEA:12605"/>
        <dbReference type="ChEBI" id="CHEBI:15361"/>
        <dbReference type="ChEBI" id="CHEBI:15378"/>
        <dbReference type="ChEBI" id="CHEBI:16526"/>
        <dbReference type="ChEBI" id="CHEBI:57792"/>
        <dbReference type="ChEBI" id="CHEBI:59776"/>
        <dbReference type="EC" id="2.2.1.7"/>
    </reaction>
</comment>
<comment type="cofactor">
    <cofactor evidence="1">
        <name>Mg(2+)</name>
        <dbReference type="ChEBI" id="CHEBI:18420"/>
    </cofactor>
    <text evidence="1">Binds 1 Mg(2+) ion per subunit.</text>
</comment>
<comment type="cofactor">
    <cofactor evidence="1">
        <name>thiamine diphosphate</name>
        <dbReference type="ChEBI" id="CHEBI:58937"/>
    </cofactor>
    <text evidence="1">Binds 1 thiamine pyrophosphate per subunit.</text>
</comment>
<comment type="pathway">
    <text evidence="1">Metabolic intermediate biosynthesis; 1-deoxy-D-xylulose 5-phosphate biosynthesis; 1-deoxy-D-xylulose 5-phosphate from D-glyceraldehyde 3-phosphate and pyruvate: step 1/1.</text>
</comment>
<comment type="subunit">
    <text evidence="1">Homodimer.</text>
</comment>
<comment type="similarity">
    <text evidence="1">Belongs to the transketolase family. DXPS subfamily.</text>
</comment>
<accession>A6Q1Z6</accession>
<feature type="chain" id="PRO_1000019050" description="1-deoxy-D-xylulose-5-phosphate synthase">
    <location>
        <begin position="1"/>
        <end position="599"/>
    </location>
</feature>
<feature type="binding site" evidence="1">
    <location>
        <position position="63"/>
    </location>
    <ligand>
        <name>thiamine diphosphate</name>
        <dbReference type="ChEBI" id="CHEBI:58937"/>
    </ligand>
</feature>
<feature type="binding site" evidence="1">
    <location>
        <begin position="104"/>
        <end position="106"/>
    </location>
    <ligand>
        <name>thiamine diphosphate</name>
        <dbReference type="ChEBI" id="CHEBI:58937"/>
    </ligand>
</feature>
<feature type="binding site" evidence="1">
    <location>
        <position position="135"/>
    </location>
    <ligand>
        <name>Mg(2+)</name>
        <dbReference type="ChEBI" id="CHEBI:18420"/>
    </ligand>
</feature>
<feature type="binding site" evidence="1">
    <location>
        <begin position="136"/>
        <end position="137"/>
    </location>
    <ligand>
        <name>thiamine diphosphate</name>
        <dbReference type="ChEBI" id="CHEBI:58937"/>
    </ligand>
</feature>
<feature type="binding site" evidence="1">
    <location>
        <position position="164"/>
    </location>
    <ligand>
        <name>Mg(2+)</name>
        <dbReference type="ChEBI" id="CHEBI:18420"/>
    </ligand>
</feature>
<feature type="binding site" evidence="1">
    <location>
        <position position="164"/>
    </location>
    <ligand>
        <name>thiamine diphosphate</name>
        <dbReference type="ChEBI" id="CHEBI:58937"/>
    </ligand>
</feature>
<feature type="binding site" evidence="1">
    <location>
        <position position="271"/>
    </location>
    <ligand>
        <name>thiamine diphosphate</name>
        <dbReference type="ChEBI" id="CHEBI:58937"/>
    </ligand>
</feature>
<feature type="binding site" evidence="1">
    <location>
        <position position="352"/>
    </location>
    <ligand>
        <name>thiamine diphosphate</name>
        <dbReference type="ChEBI" id="CHEBI:58937"/>
    </ligand>
</feature>
<proteinExistence type="inferred from homology"/>
<keyword id="KW-0414">Isoprene biosynthesis</keyword>
<keyword id="KW-0460">Magnesium</keyword>
<keyword id="KW-0479">Metal-binding</keyword>
<keyword id="KW-1185">Reference proteome</keyword>
<keyword id="KW-0784">Thiamine biosynthesis</keyword>
<keyword id="KW-0786">Thiamine pyrophosphate</keyword>
<keyword id="KW-0808">Transferase</keyword>
<reference key="1">
    <citation type="journal article" date="2007" name="Proc. Natl. Acad. Sci. U.S.A.">
        <title>Deep-sea vent epsilon-proteobacterial genomes provide insights into emergence of pathogens.</title>
        <authorList>
            <person name="Nakagawa S."/>
            <person name="Takaki Y."/>
            <person name="Shimamura S."/>
            <person name="Reysenbach A.-L."/>
            <person name="Takai K."/>
            <person name="Horikoshi K."/>
        </authorList>
    </citation>
    <scope>NUCLEOTIDE SEQUENCE [LARGE SCALE GENOMIC DNA]</scope>
    <source>
        <strain>SB155-2</strain>
    </source>
</reference>
<name>DXS_NITSB</name>
<protein>
    <recommendedName>
        <fullName evidence="1">1-deoxy-D-xylulose-5-phosphate synthase</fullName>
        <ecNumber evidence="1">2.2.1.7</ecNumber>
    </recommendedName>
    <alternativeName>
        <fullName evidence="1">1-deoxyxylulose-5-phosphate synthase</fullName>
        <shortName evidence="1">DXP synthase</shortName>
        <shortName evidence="1">DXPS</shortName>
    </alternativeName>
</protein>
<sequence length="599" mass="66921">MNIKNYTIEELEELSQKIRQRILEVVSKNGGHLSSTLGAVELIVSMHYVFDVEKDPFIFDVSHQAYAHKLLTDRWEQFDTLRQFGGISGYTKPKESPYDYWVAGHSSTSISLAVGAAKAIALKNEDRVPVVLIGDGAMSAGMVYEALNELGDRKYPVVIILNDNEMSIAKPIGAVSKYLSQKMASPFYQNMKKRTEQLLKHLPESATYIAKRMEESLKLITPGILFEELGIDYIGPIDGHDLKVLIETLTIAKQMNRPVIIHAQTLKGKGYKIAEGYYEHWHGVGPFDISTGESLKKSTKPSATSIFSKKLYDLAKEDETVVGVTAAMPSGTGLKPLIEDFGDRFWDVGIAEQHAVTSMGPLAKEGFKPFVAIYSTFLQRGYDQVIHDIALMDVGVAFAIDRAGIVGEDGETHQGAFDVSYLRPIPNMHLFAPRDPKTLEYAVEFAKDFDRPCAFRYPRGSFILDDEFEAKPFELGKAELLVESEGDVLFVGYGNGVGRAYETMKHIDEPVSLLDLRFVKPLDVELLQELSKRYRQWFVFSDSAKLGGVASALLELELPVEIVTFEYEDQFIPHGKVIDVEKALGLLPQQLAKRVKSFI</sequence>
<gene>
    <name evidence="1" type="primary">dxs</name>
    <name type="ordered locus">NIS_0391</name>
</gene>
<dbReference type="EC" id="2.2.1.7" evidence="1"/>
<dbReference type="EMBL" id="AP009178">
    <property type="protein sequence ID" value="BAF69505.1"/>
    <property type="molecule type" value="Genomic_DNA"/>
</dbReference>
<dbReference type="RefSeq" id="WP_012081768.1">
    <property type="nucleotide sequence ID" value="NC_009662.1"/>
</dbReference>
<dbReference type="SMR" id="A6Q1Z6"/>
<dbReference type="FunCoup" id="A6Q1Z6">
    <property type="interactions" value="441"/>
</dbReference>
<dbReference type="STRING" id="387092.NIS_0391"/>
<dbReference type="KEGG" id="nis:NIS_0391"/>
<dbReference type="eggNOG" id="COG1154">
    <property type="taxonomic scope" value="Bacteria"/>
</dbReference>
<dbReference type="HOGENOM" id="CLU_009227_1_4_7"/>
<dbReference type="InParanoid" id="A6Q1Z6"/>
<dbReference type="OrthoDB" id="9803371at2"/>
<dbReference type="UniPathway" id="UPA00064">
    <property type="reaction ID" value="UER00091"/>
</dbReference>
<dbReference type="Proteomes" id="UP000001118">
    <property type="component" value="Chromosome"/>
</dbReference>
<dbReference type="GO" id="GO:0005829">
    <property type="term" value="C:cytosol"/>
    <property type="evidence" value="ECO:0007669"/>
    <property type="project" value="TreeGrafter"/>
</dbReference>
<dbReference type="GO" id="GO:0008661">
    <property type="term" value="F:1-deoxy-D-xylulose-5-phosphate synthase activity"/>
    <property type="evidence" value="ECO:0007669"/>
    <property type="project" value="UniProtKB-UniRule"/>
</dbReference>
<dbReference type="GO" id="GO:0000287">
    <property type="term" value="F:magnesium ion binding"/>
    <property type="evidence" value="ECO:0007669"/>
    <property type="project" value="UniProtKB-UniRule"/>
</dbReference>
<dbReference type="GO" id="GO:0030976">
    <property type="term" value="F:thiamine pyrophosphate binding"/>
    <property type="evidence" value="ECO:0007669"/>
    <property type="project" value="UniProtKB-UniRule"/>
</dbReference>
<dbReference type="GO" id="GO:0052865">
    <property type="term" value="P:1-deoxy-D-xylulose 5-phosphate biosynthetic process"/>
    <property type="evidence" value="ECO:0007669"/>
    <property type="project" value="UniProtKB-UniPathway"/>
</dbReference>
<dbReference type="GO" id="GO:0019288">
    <property type="term" value="P:isopentenyl diphosphate biosynthetic process, methylerythritol 4-phosphate pathway"/>
    <property type="evidence" value="ECO:0007669"/>
    <property type="project" value="TreeGrafter"/>
</dbReference>
<dbReference type="GO" id="GO:0016114">
    <property type="term" value="P:terpenoid biosynthetic process"/>
    <property type="evidence" value="ECO:0007669"/>
    <property type="project" value="UniProtKB-UniRule"/>
</dbReference>
<dbReference type="GO" id="GO:0009228">
    <property type="term" value="P:thiamine biosynthetic process"/>
    <property type="evidence" value="ECO:0007669"/>
    <property type="project" value="UniProtKB-UniRule"/>
</dbReference>
<dbReference type="CDD" id="cd02007">
    <property type="entry name" value="TPP_DXS"/>
    <property type="match status" value="1"/>
</dbReference>
<dbReference type="CDD" id="cd07033">
    <property type="entry name" value="TPP_PYR_DXS_TK_like"/>
    <property type="match status" value="1"/>
</dbReference>
<dbReference type="Gene3D" id="3.40.50.920">
    <property type="match status" value="1"/>
</dbReference>
<dbReference type="Gene3D" id="3.40.50.970">
    <property type="match status" value="2"/>
</dbReference>
<dbReference type="HAMAP" id="MF_00315">
    <property type="entry name" value="DXP_synth"/>
    <property type="match status" value="1"/>
</dbReference>
<dbReference type="InterPro" id="IPR005477">
    <property type="entry name" value="Dxylulose-5-P_synthase"/>
</dbReference>
<dbReference type="InterPro" id="IPR029061">
    <property type="entry name" value="THDP-binding"/>
</dbReference>
<dbReference type="InterPro" id="IPR009014">
    <property type="entry name" value="Transketo_C/PFOR_II"/>
</dbReference>
<dbReference type="InterPro" id="IPR005475">
    <property type="entry name" value="Transketolase-like_Pyr-bd"/>
</dbReference>
<dbReference type="InterPro" id="IPR020826">
    <property type="entry name" value="Transketolase_BS"/>
</dbReference>
<dbReference type="InterPro" id="IPR033248">
    <property type="entry name" value="Transketolase_C"/>
</dbReference>
<dbReference type="InterPro" id="IPR049557">
    <property type="entry name" value="Transketolase_CS"/>
</dbReference>
<dbReference type="NCBIfam" id="TIGR00204">
    <property type="entry name" value="dxs"/>
    <property type="match status" value="1"/>
</dbReference>
<dbReference type="NCBIfam" id="NF003933">
    <property type="entry name" value="PRK05444.2-2"/>
    <property type="match status" value="1"/>
</dbReference>
<dbReference type="PANTHER" id="PTHR43322">
    <property type="entry name" value="1-D-DEOXYXYLULOSE 5-PHOSPHATE SYNTHASE-RELATED"/>
    <property type="match status" value="1"/>
</dbReference>
<dbReference type="PANTHER" id="PTHR43322:SF5">
    <property type="entry name" value="1-DEOXY-D-XYLULOSE-5-PHOSPHATE SYNTHASE, CHLOROPLASTIC"/>
    <property type="match status" value="1"/>
</dbReference>
<dbReference type="Pfam" id="PF13292">
    <property type="entry name" value="DXP_synthase_N"/>
    <property type="match status" value="1"/>
</dbReference>
<dbReference type="Pfam" id="PF02779">
    <property type="entry name" value="Transket_pyr"/>
    <property type="match status" value="1"/>
</dbReference>
<dbReference type="Pfam" id="PF02780">
    <property type="entry name" value="Transketolase_C"/>
    <property type="match status" value="1"/>
</dbReference>
<dbReference type="SMART" id="SM00861">
    <property type="entry name" value="Transket_pyr"/>
    <property type="match status" value="1"/>
</dbReference>
<dbReference type="SUPFAM" id="SSF52518">
    <property type="entry name" value="Thiamin diphosphate-binding fold (THDP-binding)"/>
    <property type="match status" value="2"/>
</dbReference>
<dbReference type="SUPFAM" id="SSF52922">
    <property type="entry name" value="TK C-terminal domain-like"/>
    <property type="match status" value="1"/>
</dbReference>
<dbReference type="PROSITE" id="PS00801">
    <property type="entry name" value="TRANSKETOLASE_1"/>
    <property type="match status" value="1"/>
</dbReference>
<dbReference type="PROSITE" id="PS00802">
    <property type="entry name" value="TRANSKETOLASE_2"/>
    <property type="match status" value="1"/>
</dbReference>